<organism>
    <name type="scientific">Streptococcus pyogenes</name>
    <dbReference type="NCBI Taxonomy" id="1314"/>
    <lineage>
        <taxon>Bacteria</taxon>
        <taxon>Bacillati</taxon>
        <taxon>Bacillota</taxon>
        <taxon>Bacilli</taxon>
        <taxon>Lactobacillales</taxon>
        <taxon>Streptococcaceae</taxon>
        <taxon>Streptococcus</taxon>
    </lineage>
</organism>
<reference key="1">
    <citation type="journal article" date="1987" name="Agric. Biol. Chem.">
        <title>Cloning and expression of the antitumor glycoprotein gene of Streptococcus pyogenes Su in Escherichia coli.</title>
        <authorList>
            <person name="Kanaoka M."/>
            <person name="Kawanaka C."/>
            <person name="Negoro T."/>
            <person name="Fukita Y."/>
            <person name="Taya K."/>
            <person name="Agui H."/>
        </authorList>
    </citation>
    <scope>NUCLEOTIDE SEQUENCE [GENOMIC DNA]</scope>
    <source>
        <strain>ATCC 21060 / Su / DSM 2072</strain>
    </source>
</reference>
<proteinExistence type="inferred from homology"/>
<protein>
    <recommendedName>
        <fullName>Uncharacterized acetyltransferase in arcA 3'region</fullName>
        <ecNumber>2.3.1.-</ecNumber>
    </recommendedName>
</protein>
<accession>P0C0H4</accession>
<accession>P16963</accession>
<evidence type="ECO:0000255" key="1">
    <source>
        <dbReference type="PROSITE-ProRule" id="PRU00532"/>
    </source>
</evidence>
<evidence type="ECO:0000305" key="2"/>
<feature type="chain" id="PRO_0000205419" description="Uncharacterized acetyltransferase in arcA 3'region">
    <location>
        <begin position="1"/>
        <end position="146"/>
    </location>
</feature>
<feature type="domain" description="N-acetyltransferase" evidence="1">
    <location>
        <begin position="1"/>
        <end position="120"/>
    </location>
</feature>
<keyword id="KW-0012">Acyltransferase</keyword>
<keyword id="KW-0808">Transferase</keyword>
<sequence>MTDKFDANDETRTVYAVVYDNDQPVSTGQFLAETKIEARLTRIVTLADYCGCGYGAKVTEALETYTRREGFYQLTIHSELTAQTFYENLGYQTYGSKYLEDGEYCQSLVKTILKWEKNMDIAMLIAIVGGLLGCYLYLTKNNEPKD</sequence>
<comment type="similarity">
    <text evidence="2">Belongs to the acetyltransferase family.</text>
</comment>
<name>YARCA_STRPY</name>
<dbReference type="EC" id="2.3.1.-"/>
<dbReference type="EMBL" id="D13790">
    <property type="protein sequence ID" value="BAA02939.1"/>
    <property type="molecule type" value="Genomic_DNA"/>
</dbReference>
<dbReference type="PIR" id="JE0061">
    <property type="entry name" value="JE0061"/>
</dbReference>
<dbReference type="RefSeq" id="WP_011184767.1">
    <property type="nucleotide sequence ID" value="NZ_WVFV01000006.1"/>
</dbReference>
<dbReference type="SMR" id="P0C0H4"/>
<dbReference type="STRING" id="1314.SD89_06720"/>
<dbReference type="PATRIC" id="fig|1314.197.peg.549"/>
<dbReference type="eggNOG" id="COG0454">
    <property type="taxonomic scope" value="Bacteria"/>
</dbReference>
<dbReference type="GO" id="GO:0016747">
    <property type="term" value="F:acyltransferase activity, transferring groups other than amino-acyl groups"/>
    <property type="evidence" value="ECO:0007669"/>
    <property type="project" value="InterPro"/>
</dbReference>
<dbReference type="Gene3D" id="3.40.630.30">
    <property type="match status" value="1"/>
</dbReference>
<dbReference type="InterPro" id="IPR016181">
    <property type="entry name" value="Acyl_CoA_acyltransferase"/>
</dbReference>
<dbReference type="InterPro" id="IPR000182">
    <property type="entry name" value="GNAT_dom"/>
</dbReference>
<dbReference type="Pfam" id="PF13673">
    <property type="entry name" value="Acetyltransf_10"/>
    <property type="match status" value="1"/>
</dbReference>
<dbReference type="SUPFAM" id="SSF55729">
    <property type="entry name" value="Acyl-CoA N-acyltransferases (Nat)"/>
    <property type="match status" value="1"/>
</dbReference>
<dbReference type="PROSITE" id="PS51186">
    <property type="entry name" value="GNAT"/>
    <property type="match status" value="1"/>
</dbReference>